<protein>
    <recommendedName>
        <fullName evidence="1">Putative septation protein SpoVG</fullName>
    </recommendedName>
</protein>
<evidence type="ECO:0000255" key="1">
    <source>
        <dbReference type="HAMAP-Rule" id="MF_00819"/>
    </source>
</evidence>
<organism>
    <name type="scientific">Clostridium botulinum (strain Eklund 17B / Type B)</name>
    <dbReference type="NCBI Taxonomy" id="935198"/>
    <lineage>
        <taxon>Bacteria</taxon>
        <taxon>Bacillati</taxon>
        <taxon>Bacillota</taxon>
        <taxon>Clostridia</taxon>
        <taxon>Eubacteriales</taxon>
        <taxon>Clostridiaceae</taxon>
        <taxon>Clostridium</taxon>
    </lineage>
</organism>
<keyword id="KW-0131">Cell cycle</keyword>
<keyword id="KW-0132">Cell division</keyword>
<keyword id="KW-0717">Septation</keyword>
<feature type="chain" id="PRO_1000196497" description="Putative septation protein SpoVG">
    <location>
        <begin position="1"/>
        <end position="92"/>
    </location>
</feature>
<gene>
    <name evidence="1" type="primary">spoVG</name>
    <name type="ordered locus">CLL_A0147</name>
</gene>
<accession>B2TI06</accession>
<dbReference type="EMBL" id="CP001056">
    <property type="protein sequence ID" value="ACD21712.1"/>
    <property type="molecule type" value="Genomic_DNA"/>
</dbReference>
<dbReference type="SMR" id="B2TI06"/>
<dbReference type="KEGG" id="cbk:CLL_A0147"/>
<dbReference type="PATRIC" id="fig|935198.13.peg.137"/>
<dbReference type="HOGENOM" id="CLU_103669_2_1_9"/>
<dbReference type="Proteomes" id="UP000001195">
    <property type="component" value="Chromosome"/>
</dbReference>
<dbReference type="GO" id="GO:0000917">
    <property type="term" value="P:division septum assembly"/>
    <property type="evidence" value="ECO:0007669"/>
    <property type="project" value="UniProtKB-KW"/>
</dbReference>
<dbReference type="GO" id="GO:0030435">
    <property type="term" value="P:sporulation resulting in formation of a cellular spore"/>
    <property type="evidence" value="ECO:0007669"/>
    <property type="project" value="InterPro"/>
</dbReference>
<dbReference type="Gene3D" id="3.30.1120.40">
    <property type="entry name" value="Stage V sporulation protein G"/>
    <property type="match status" value="1"/>
</dbReference>
<dbReference type="HAMAP" id="MF_00819">
    <property type="entry name" value="SpoVG"/>
    <property type="match status" value="1"/>
</dbReference>
<dbReference type="InterPro" id="IPR007170">
    <property type="entry name" value="SpoVG"/>
</dbReference>
<dbReference type="InterPro" id="IPR036751">
    <property type="entry name" value="SpoVG_sf"/>
</dbReference>
<dbReference type="NCBIfam" id="NF009749">
    <property type="entry name" value="PRK13259.1"/>
    <property type="match status" value="1"/>
</dbReference>
<dbReference type="PANTHER" id="PTHR38429">
    <property type="entry name" value="SEPTATION PROTEIN SPOVG-RELATED"/>
    <property type="match status" value="1"/>
</dbReference>
<dbReference type="PANTHER" id="PTHR38429:SF1">
    <property type="entry name" value="SEPTATION PROTEIN SPOVG-RELATED"/>
    <property type="match status" value="1"/>
</dbReference>
<dbReference type="Pfam" id="PF04026">
    <property type="entry name" value="SpoVG"/>
    <property type="match status" value="1"/>
</dbReference>
<dbReference type="SUPFAM" id="SSF160537">
    <property type="entry name" value="SpoVG-like"/>
    <property type="match status" value="1"/>
</dbReference>
<proteinExistence type="inferred from homology"/>
<sequence>MQITDVRIRKISSEGKMKAIVSVTFDNEFVVHDIKVIEGQNGLFIAMPSRKTPTGEFKDIAHPIVMDSREKIQNEILSAYAKAIEEQDVEEE</sequence>
<reference key="1">
    <citation type="submission" date="2008-04" db="EMBL/GenBank/DDBJ databases">
        <title>Complete sequence of Clostridium botulinum strain Eklund.</title>
        <authorList>
            <person name="Brinkac L.M."/>
            <person name="Brown J.L."/>
            <person name="Bruce D."/>
            <person name="Detter C."/>
            <person name="Munk C."/>
            <person name="Smith L.A."/>
            <person name="Smith T.J."/>
            <person name="Sutton G."/>
            <person name="Brettin T.S."/>
        </authorList>
    </citation>
    <scope>NUCLEOTIDE SEQUENCE [LARGE SCALE GENOMIC DNA]</scope>
    <source>
        <strain>Eklund 17B / Type B</strain>
    </source>
</reference>
<comment type="function">
    <text evidence="1">Could be involved in septation.</text>
</comment>
<comment type="similarity">
    <text evidence="1">Belongs to the SpoVG family.</text>
</comment>
<name>SP5G_CLOBB</name>